<keyword id="KW-0002">3D-structure</keyword>
<keyword id="KW-0025">Alternative splicing</keyword>
<keyword id="KW-0238">DNA-binding</keyword>
<keyword id="KW-1017">Isopeptide bond</keyword>
<keyword id="KW-0479">Metal-binding</keyword>
<keyword id="KW-0539">Nucleus</keyword>
<keyword id="KW-1185">Reference proteome</keyword>
<keyword id="KW-0677">Repeat</keyword>
<keyword id="KW-0804">Transcription</keyword>
<keyword id="KW-0805">Transcription regulation</keyword>
<keyword id="KW-0832">Ubl conjugation</keyword>
<keyword id="KW-0862">Zinc</keyword>
<keyword id="KW-0863">Zinc-finger</keyword>
<comment type="function">
    <text evidence="4 5 6 7 8 9 10">Binds to a number of sites in the transcriptional regulatory region of ftz (PubMed:2104801). Isoform beta is required to repress inappropriate segmentation gene transcription and repress genes incompatible with development of photoreceptor cell fates (PubMed:12384587, PubMed:18160715). Probable repressor of the transcription of the segmentation genes ftz, eve, h, odd, run, and en (PubMed:8223261). Inhibits Trl-dependent activation of eve (PubMed:12384587). May bind to the region AGGGC/TGG (PubMed:8247159). Degradation of ttk is directed by binding of sinah or sina, via the adapter molecule phyl which binds to the BTB domain of ttk (PubMed:17962185, PubMed:18160715). A second method of degradation exists that is phyl-independent, this is mediated by recognition of motifs in the C-terminus of ttk (PubMed:17962185).</text>
</comment>
<comment type="subunit">
    <text evidence="4 5 6">Can form homodimers (PubMed:12384587). Interacts with Trl in vivo via the BTB domain (PubMed:12384587). Interacts with phyl (PubMed:17962185). Interacts with Usp47 (PubMed:18160715).</text>
</comment>
<comment type="interaction">
    <interactant intactId="EBI-6173284">
        <id>P17789</id>
    </interactant>
    <interactant intactId="EBI-15122666">
        <id>Q3KN55</id>
        <label>Ank2</label>
    </interactant>
    <organismsDiffer>false</organismsDiffer>
    <experiments>4</experiments>
</comment>
<comment type="interaction">
    <interactant intactId="EBI-6173284">
        <id>P17789</id>
    </interactant>
    <interactant intactId="EBI-3423007">
        <id>O62531</id>
        <label>AP-1mu</label>
    </interactant>
    <organismsDiffer>false</organismsDiffer>
    <experiments>4</experiments>
</comment>
<comment type="interaction">
    <interactant intactId="EBI-6173284">
        <id>P17789</id>
    </interactant>
    <interactant intactId="EBI-91014">
        <id>Q0E8J0</id>
        <label>MEP-1</label>
    </interactant>
    <organismsDiffer>false</organismsDiffer>
    <experiments>6</experiments>
</comment>
<comment type="interaction">
    <interactant intactId="EBI-6173284">
        <id>P17789</id>
    </interactant>
    <interactant intactId="EBI-152023">
        <id>Q8T3Y0</id>
        <label>sinah</label>
    </interactant>
    <organismsDiffer>false</organismsDiffer>
    <experiments>4</experiments>
</comment>
<comment type="subcellular location">
    <subcellularLocation>
        <location>Nucleus</location>
    </subcellularLocation>
</comment>
<comment type="alternative products">
    <event type="alternative splicing"/>
    <isoform>
        <id>P17789-1</id>
        <name>Beta</name>
        <name>p69</name>
        <name>C</name>
        <name>D</name>
        <name>F</name>
        <sequence type="displayed"/>
    </isoform>
    <isoform>
        <id>P42282-1</id>
        <name>Alpha</name>
        <name>p88</name>
        <name>A</name>
        <name>E</name>
        <sequence type="external"/>
    </isoform>
</comment>
<comment type="developmental stage">
    <text evidence="7 8">Expressed both maternally and zygotically. Expressed in preblastoderm embryos, followed by complete decay upon formation of the cellular blastoderm when ftz striped expression is at its peak.</text>
</comment>
<comment type="PTM">
    <text evidence="6">Polyubiquitinated by sina. Polyubiquitin linkage is mainly through 'Lys-48', but linkage through 'Lys-63' also occurs. Deubiquitination by Usp47 leads to its stabilization.</text>
</comment>
<comment type="caution">
    <text evidence="11">It is uncertain whether Met-1 or Met-3 is the initiator.</text>
</comment>
<comment type="sequence caution" evidence="11">
    <conflict type="erroneous initiation">
        <sequence resource="EMBL-CDS" id="AAA28544"/>
    </conflict>
</comment>
<comment type="sequence caution" evidence="11">
    <conflict type="frameshift">
        <sequence resource="EMBL-CDS" id="ABB36443"/>
    </conflict>
</comment>
<comment type="sequence caution" evidence="11">
    <conflict type="erroneous initiation">
        <sequence resource="EMBL-CDS" id="CAA34981"/>
    </conflict>
</comment>
<accession>P17789</accession>
<accession>A4V3Q4</accession>
<accession>Q32KE0</accession>
<accession>Q9V9V1</accession>
<accession>Q9V9V3</accession>
<sequence>MKMASQRFCLRWNNHQSNLLSVFDQLLHAETFTDVTLAVEGQHLKAHKMVLSACSPYFNTLFVSHPEKHPIVILKDVPYSDMKSLLDFMYRGEVSVDQERLTAFLRVAESLRIKGLTEVNDDKPSPAAAAAGAGATGSESTATTPQLQRIQPYLVPQRNRSQAGGLLASAANAGNTPTLPVQPSLLSSALMPKRKRGRPRKLSGSSNGTGNDYDDFDRENMMNDSSDLGNGKMCNESYSGNDDGSDDNQPNAGHTDDLNESRDSLPSKRSKNSKDHRVVSHHEDNSTSDGNDSDGEGLDTSYMEPQLMLDEYDEPVEFKYNPLTDNSSPTQDHTDGSHLNEQARQQAFLIAAQRKHQVETAAAAAASGIKLNIIGMAAGGAQVKSMVSIPKLTPIGKVNAASTPLVSPAGSFSTATVKPRVQKRPKLGKQNGDVKPAVFSSQEYLDIYNSNDGFKLKAAGLSGSTPNLSAGLGTPSVKTKLNLSSNVGEGEAEGSVRDYCTKEGEHTYRCKVCSRVYTHISNFCRHYVTSHKRNVKVYPCPFCFKEFTRKDNMTAHVKIIHKIENPSTALATVAAANLAGQPLGVSGASTPPPPDLSGQNSNQSLPATSNALSTSSSSSTSSSSGSLGPLTTSAPPAPAAAAQ</sequence>
<dbReference type="EMBL" id="X17121">
    <property type="protein sequence ID" value="CAA34981.1"/>
    <property type="status" value="ALT_INIT"/>
    <property type="molecule type" value="mRNA"/>
</dbReference>
<dbReference type="EMBL" id="M62856">
    <property type="protein sequence ID" value="AAA28544.1"/>
    <property type="status" value="ALT_INIT"/>
    <property type="molecule type" value="mRNA"/>
</dbReference>
<dbReference type="EMBL" id="X71627">
    <property type="protein sequence ID" value="CAA50634.1"/>
    <property type="molecule type" value="mRNA"/>
</dbReference>
<dbReference type="EMBL" id="AE014297">
    <property type="protein sequence ID" value="AAF57181.1"/>
    <property type="molecule type" value="Genomic_DNA"/>
</dbReference>
<dbReference type="EMBL" id="AE014297">
    <property type="protein sequence ID" value="AAF57182.3"/>
    <property type="molecule type" value="Genomic_DNA"/>
</dbReference>
<dbReference type="EMBL" id="AE014297">
    <property type="protein sequence ID" value="AAN14283.1"/>
    <property type="molecule type" value="Genomic_DNA"/>
</dbReference>
<dbReference type="EMBL" id="AY122169">
    <property type="protein sequence ID" value="AAM52681.1"/>
    <property type="molecule type" value="mRNA"/>
</dbReference>
<dbReference type="EMBL" id="BT001723">
    <property type="protein sequence ID" value="AAN71478.1"/>
    <property type="molecule type" value="mRNA"/>
</dbReference>
<dbReference type="EMBL" id="BT023939">
    <property type="protein sequence ID" value="ABB36443.1"/>
    <property type="status" value="ALT_FRAME"/>
    <property type="molecule type" value="mRNA"/>
</dbReference>
<dbReference type="PIR" id="S36017">
    <property type="entry name" value="S36017"/>
</dbReference>
<dbReference type="RefSeq" id="NP_001189330.1">
    <molecule id="P17789-1"/>
    <property type="nucleotide sequence ID" value="NM_001202401.1"/>
</dbReference>
<dbReference type="RefSeq" id="NP_524911.3">
    <molecule id="P17789-1"/>
    <property type="nucleotide sequence ID" value="NM_080172.4"/>
</dbReference>
<dbReference type="RefSeq" id="NP_733446.1">
    <molecule id="P17789-1"/>
    <property type="nucleotide sequence ID" value="NM_170567.3"/>
</dbReference>
<dbReference type="RefSeq" id="NP_733447.1">
    <molecule id="P17789-1"/>
    <property type="nucleotide sequence ID" value="NM_170568.3"/>
</dbReference>
<dbReference type="PDB" id="2DRP">
    <property type="method" value="X-ray"/>
    <property type="resolution" value="2.80 A"/>
    <property type="chains" value="A/D=501-563"/>
</dbReference>
<dbReference type="PDBsum" id="2DRP"/>
<dbReference type="SMR" id="P17789"/>
<dbReference type="BioGRID" id="71315">
    <property type="interactions" value="104"/>
</dbReference>
<dbReference type="ELM" id="P17789"/>
<dbReference type="IntAct" id="P17789">
    <property type="interactions" value="46"/>
</dbReference>
<dbReference type="iPTMnet" id="P17789"/>
<dbReference type="DNASU" id="48317"/>
<dbReference type="EnsemblMetazoa" id="FBtr0085826">
    <molecule id="P17789-1"/>
    <property type="protein sequence ID" value="FBpp0085187"/>
    <property type="gene ID" value="FBgn0003870"/>
</dbReference>
<dbReference type="EnsemblMetazoa" id="FBtr0085828">
    <molecule id="P17789-1"/>
    <property type="protein sequence ID" value="FBpp0085189"/>
    <property type="gene ID" value="FBgn0003870"/>
</dbReference>
<dbReference type="EnsemblMetazoa" id="FBtr0085830">
    <molecule id="P17789-1"/>
    <property type="protein sequence ID" value="FBpp0085191"/>
    <property type="gene ID" value="FBgn0003870"/>
</dbReference>
<dbReference type="EnsemblMetazoa" id="FBtr0303228">
    <molecule id="P17789-1"/>
    <property type="protein sequence ID" value="FBpp0292320"/>
    <property type="gene ID" value="FBgn0003870"/>
</dbReference>
<dbReference type="GeneID" id="48317"/>
<dbReference type="AGR" id="FB:FBgn0003870"/>
<dbReference type="CTD" id="7272"/>
<dbReference type="FlyBase" id="FBgn0003870">
    <property type="gene designation" value="ttk"/>
</dbReference>
<dbReference type="VEuPathDB" id="VectorBase:FBgn0003870"/>
<dbReference type="GeneTree" id="ENSGT00940000175057"/>
<dbReference type="OMA" id="RCKICAR"/>
<dbReference type="OrthoDB" id="19132at2759"/>
<dbReference type="SignaLink" id="P17789"/>
<dbReference type="BioGRID-ORCS" id="48317">
    <property type="hits" value="0 hits in 1 CRISPR screen"/>
</dbReference>
<dbReference type="EvolutionaryTrace" id="P17789"/>
<dbReference type="GenomeRNAi" id="48317"/>
<dbReference type="Proteomes" id="UP000000803">
    <property type="component" value="Chromosome 3R"/>
</dbReference>
<dbReference type="Bgee" id="FBgn0003870">
    <property type="expression patterns" value="Expressed in polar follicle cell (Drosophila) in ovary and 226 other cell types or tissues"/>
</dbReference>
<dbReference type="ExpressionAtlas" id="P17789">
    <property type="expression patterns" value="baseline and differential"/>
</dbReference>
<dbReference type="GO" id="GO:0005634">
    <property type="term" value="C:nucleus"/>
    <property type="evidence" value="ECO:0000314"/>
    <property type="project" value="FlyBase"/>
</dbReference>
<dbReference type="GO" id="GO:0005700">
    <property type="term" value="C:polytene chromosome"/>
    <property type="evidence" value="ECO:0000314"/>
    <property type="project" value="FlyBase"/>
</dbReference>
<dbReference type="GO" id="GO:0017053">
    <property type="term" value="C:transcription repressor complex"/>
    <property type="evidence" value="ECO:0000353"/>
    <property type="project" value="FlyBase"/>
</dbReference>
<dbReference type="GO" id="GO:0003682">
    <property type="term" value="F:chromatin binding"/>
    <property type="evidence" value="ECO:0000314"/>
    <property type="project" value="FlyBase"/>
</dbReference>
<dbReference type="GO" id="GO:0001227">
    <property type="term" value="F:DNA-binding transcription repressor activity, RNA polymerase II-specific"/>
    <property type="evidence" value="ECO:0000314"/>
    <property type="project" value="FlyBase"/>
</dbReference>
<dbReference type="GO" id="GO:1990841">
    <property type="term" value="F:promoter-specific chromatin binding"/>
    <property type="evidence" value="ECO:0000314"/>
    <property type="project" value="FlyBase"/>
</dbReference>
<dbReference type="GO" id="GO:0042803">
    <property type="term" value="F:protein homodimerization activity"/>
    <property type="evidence" value="ECO:0000314"/>
    <property type="project" value="FlyBase"/>
</dbReference>
<dbReference type="GO" id="GO:0000978">
    <property type="term" value="F:RNA polymerase II cis-regulatory region sequence-specific DNA binding"/>
    <property type="evidence" value="ECO:0000314"/>
    <property type="project" value="FlyBase"/>
</dbReference>
<dbReference type="GO" id="GO:0008270">
    <property type="term" value="F:zinc ion binding"/>
    <property type="evidence" value="ECO:0007669"/>
    <property type="project" value="UniProtKB-KW"/>
</dbReference>
<dbReference type="GO" id="GO:0035147">
    <property type="term" value="P:branch fusion, open tracheal system"/>
    <property type="evidence" value="ECO:0000315"/>
    <property type="project" value="FlyBase"/>
</dbReference>
<dbReference type="GO" id="GO:0060446">
    <property type="term" value="P:branching involved in open tracheal system development"/>
    <property type="evidence" value="ECO:0000315"/>
    <property type="project" value="FlyBase"/>
</dbReference>
<dbReference type="GO" id="GO:0040003">
    <property type="term" value="P:chitin-based cuticle development"/>
    <property type="evidence" value="ECO:0000315"/>
    <property type="project" value="FlyBase"/>
</dbReference>
<dbReference type="GO" id="GO:0042675">
    <property type="term" value="P:compound eye cone cell differentiation"/>
    <property type="evidence" value="ECO:0000315"/>
    <property type="project" value="FlyBase"/>
</dbReference>
<dbReference type="GO" id="GO:0048750">
    <property type="term" value="P:compound eye corneal lens morphogenesis"/>
    <property type="evidence" value="ECO:0000315"/>
    <property type="project" value="FlyBase"/>
</dbReference>
<dbReference type="GO" id="GO:0046843">
    <property type="term" value="P:dorsal appendage formation"/>
    <property type="evidence" value="ECO:0000315"/>
    <property type="project" value="FlyBase"/>
</dbReference>
<dbReference type="GO" id="GO:0035001">
    <property type="term" value="P:dorsal trunk growth, open tracheal system"/>
    <property type="evidence" value="ECO:0000315"/>
    <property type="project" value="FlyBase"/>
</dbReference>
<dbReference type="GO" id="GO:0030707">
    <property type="term" value="P:follicle cell of egg chamber development"/>
    <property type="evidence" value="ECO:0000315"/>
    <property type="project" value="FlyBase"/>
</dbReference>
<dbReference type="GO" id="GO:0048626">
    <property type="term" value="P:myoblast fate specification"/>
    <property type="evidence" value="ECO:0000315"/>
    <property type="project" value="FlyBase"/>
</dbReference>
<dbReference type="GO" id="GO:0045892">
    <property type="term" value="P:negative regulation of DNA-templated transcription"/>
    <property type="evidence" value="ECO:0000314"/>
    <property type="project" value="FlyBase"/>
</dbReference>
<dbReference type="GO" id="GO:0007422">
    <property type="term" value="P:peripheral nervous system development"/>
    <property type="evidence" value="ECO:0000304"/>
    <property type="project" value="FlyBase"/>
</dbReference>
<dbReference type="GO" id="GO:1903688">
    <property type="term" value="P:positive regulation of border follicle cell migration"/>
    <property type="evidence" value="ECO:0000315"/>
    <property type="project" value="FlyBase"/>
</dbReference>
<dbReference type="GO" id="GO:0045944">
    <property type="term" value="P:positive regulation of transcription by RNA polymerase II"/>
    <property type="evidence" value="ECO:0000314"/>
    <property type="project" value="FlyBase"/>
</dbReference>
<dbReference type="GO" id="GO:0048053">
    <property type="term" value="P:R1/R6 development"/>
    <property type="evidence" value="ECO:0000315"/>
    <property type="project" value="FlyBase"/>
</dbReference>
<dbReference type="GO" id="GO:0045467">
    <property type="term" value="P:R7 cell development"/>
    <property type="evidence" value="ECO:0000315"/>
    <property type="project" value="FlyBase"/>
</dbReference>
<dbReference type="GO" id="GO:0008360">
    <property type="term" value="P:regulation of cell shape"/>
    <property type="evidence" value="ECO:0000315"/>
    <property type="project" value="FlyBase"/>
</dbReference>
<dbReference type="GO" id="GO:0042682">
    <property type="term" value="P:regulation of compound eye cone cell fate specification"/>
    <property type="evidence" value="ECO:0000315"/>
    <property type="project" value="FlyBase"/>
</dbReference>
<dbReference type="GO" id="GO:0016476">
    <property type="term" value="P:regulation of embryonic cell shape"/>
    <property type="evidence" value="ECO:0000315"/>
    <property type="project" value="FlyBase"/>
</dbReference>
<dbReference type="GO" id="GO:0006357">
    <property type="term" value="P:regulation of transcription by RNA polymerase II"/>
    <property type="evidence" value="ECO:0000318"/>
    <property type="project" value="GO_Central"/>
</dbReference>
<dbReference type="GO" id="GO:0035151">
    <property type="term" value="P:regulation of tube size, open tracheal system"/>
    <property type="evidence" value="ECO:0000315"/>
    <property type="project" value="FlyBase"/>
</dbReference>
<dbReference type="GO" id="GO:0007426">
    <property type="term" value="P:tracheal outgrowth, open tracheal system"/>
    <property type="evidence" value="ECO:0000315"/>
    <property type="project" value="FlyBase"/>
</dbReference>
<dbReference type="CDD" id="cd18315">
    <property type="entry name" value="BTB_POZ_BAB-like"/>
    <property type="match status" value="1"/>
</dbReference>
<dbReference type="FunFam" id="3.30.710.10:FF:000091">
    <property type="entry name" value="Lola, isoform F"/>
    <property type="match status" value="1"/>
</dbReference>
<dbReference type="FunFam" id="3.30.160.60:FF:001861">
    <property type="entry name" value="Protein tramtrack, beta isoform"/>
    <property type="match status" value="1"/>
</dbReference>
<dbReference type="FunFam" id="3.30.160.60:FF:001537">
    <property type="entry name" value="Tramtrack, isoform C"/>
    <property type="match status" value="1"/>
</dbReference>
<dbReference type="Gene3D" id="3.30.160.60">
    <property type="entry name" value="Classic Zinc Finger"/>
    <property type="match status" value="2"/>
</dbReference>
<dbReference type="Gene3D" id="3.30.710.10">
    <property type="entry name" value="Potassium Channel Kv1.1, Chain A"/>
    <property type="match status" value="1"/>
</dbReference>
<dbReference type="InterPro" id="IPR000210">
    <property type="entry name" value="BTB/POZ_dom"/>
</dbReference>
<dbReference type="InterPro" id="IPR051095">
    <property type="entry name" value="Dros_DevTransReg"/>
</dbReference>
<dbReference type="InterPro" id="IPR011333">
    <property type="entry name" value="SKP1/BTB/POZ_sf"/>
</dbReference>
<dbReference type="InterPro" id="IPR036236">
    <property type="entry name" value="Znf_C2H2_sf"/>
</dbReference>
<dbReference type="InterPro" id="IPR013087">
    <property type="entry name" value="Znf_C2H2_type"/>
</dbReference>
<dbReference type="PANTHER" id="PTHR23110">
    <property type="entry name" value="BTB DOMAIN TRANSCRIPTION FACTOR"/>
    <property type="match status" value="1"/>
</dbReference>
<dbReference type="PANTHER" id="PTHR23110:SF82">
    <property type="entry name" value="PROTEIN TRAMTRACK, ALPHA ISOFORM"/>
    <property type="match status" value="1"/>
</dbReference>
<dbReference type="Pfam" id="PF00651">
    <property type="entry name" value="BTB"/>
    <property type="match status" value="1"/>
</dbReference>
<dbReference type="Pfam" id="PF00096">
    <property type="entry name" value="zf-C2H2"/>
    <property type="match status" value="1"/>
</dbReference>
<dbReference type="SMART" id="SM00225">
    <property type="entry name" value="BTB"/>
    <property type="match status" value="1"/>
</dbReference>
<dbReference type="SMART" id="SM00355">
    <property type="entry name" value="ZnF_C2H2"/>
    <property type="match status" value="2"/>
</dbReference>
<dbReference type="SUPFAM" id="SSF57667">
    <property type="entry name" value="beta-beta-alpha zinc fingers"/>
    <property type="match status" value="2"/>
</dbReference>
<dbReference type="SUPFAM" id="SSF54695">
    <property type="entry name" value="POZ domain"/>
    <property type="match status" value="1"/>
</dbReference>
<dbReference type="PROSITE" id="PS50097">
    <property type="entry name" value="BTB"/>
    <property type="match status" value="1"/>
</dbReference>
<dbReference type="PROSITE" id="PS00028">
    <property type="entry name" value="ZINC_FINGER_C2H2_1"/>
    <property type="match status" value="2"/>
</dbReference>
<dbReference type="PROSITE" id="PS50157">
    <property type="entry name" value="ZINC_FINGER_C2H2_2"/>
    <property type="match status" value="2"/>
</dbReference>
<evidence type="ECO:0000255" key="1">
    <source>
        <dbReference type="PROSITE-ProRule" id="PRU00037"/>
    </source>
</evidence>
<evidence type="ECO:0000255" key="2">
    <source>
        <dbReference type="PROSITE-ProRule" id="PRU00042"/>
    </source>
</evidence>
<evidence type="ECO:0000256" key="3">
    <source>
        <dbReference type="SAM" id="MobiDB-lite"/>
    </source>
</evidence>
<evidence type="ECO:0000269" key="4">
    <source>
    </source>
</evidence>
<evidence type="ECO:0000269" key="5">
    <source>
    </source>
</evidence>
<evidence type="ECO:0000269" key="6">
    <source>
    </source>
</evidence>
<evidence type="ECO:0000269" key="7">
    <source>
    </source>
</evidence>
<evidence type="ECO:0000269" key="8">
    <source>
    </source>
</evidence>
<evidence type="ECO:0000269" key="9">
    <source>
    </source>
</evidence>
<evidence type="ECO:0000269" key="10">
    <source>
    </source>
</evidence>
<evidence type="ECO:0000305" key="11"/>
<evidence type="ECO:0007829" key="12">
    <source>
        <dbReference type="PDB" id="2DRP"/>
    </source>
</evidence>
<proteinExistence type="evidence at protein level"/>
<organism>
    <name type="scientific">Drosophila melanogaster</name>
    <name type="common">Fruit fly</name>
    <dbReference type="NCBI Taxonomy" id="7227"/>
    <lineage>
        <taxon>Eukaryota</taxon>
        <taxon>Metazoa</taxon>
        <taxon>Ecdysozoa</taxon>
        <taxon>Arthropoda</taxon>
        <taxon>Hexapoda</taxon>
        <taxon>Insecta</taxon>
        <taxon>Pterygota</taxon>
        <taxon>Neoptera</taxon>
        <taxon>Endopterygota</taxon>
        <taxon>Diptera</taxon>
        <taxon>Brachycera</taxon>
        <taxon>Muscomorpha</taxon>
        <taxon>Ephydroidea</taxon>
        <taxon>Drosophilidae</taxon>
        <taxon>Drosophila</taxon>
        <taxon>Sophophora</taxon>
    </lineage>
</organism>
<protein>
    <recommendedName>
        <fullName>Protein tramtrack, beta isoform</fullName>
    </recommendedName>
    <alternativeName>
        <fullName>Repressor protein fushi tarazu</fullName>
    </alternativeName>
    <alternativeName>
        <fullName>Tramtrack p69</fullName>
    </alternativeName>
</protein>
<name>TTKB_DROME</name>
<feature type="chain" id="PRO_0000047079" description="Protein tramtrack, beta isoform">
    <location>
        <begin position="1"/>
        <end position="643"/>
    </location>
</feature>
<feature type="domain" description="BTB" evidence="1">
    <location>
        <begin position="33"/>
        <end position="98"/>
    </location>
</feature>
<feature type="zinc finger region" description="C2H2-type 1" evidence="2">
    <location>
        <begin position="508"/>
        <end position="531"/>
    </location>
</feature>
<feature type="zinc finger region" description="C2H2-type 2" evidence="2">
    <location>
        <begin position="538"/>
        <end position="561"/>
    </location>
</feature>
<feature type="region of interest" description="Disordered" evidence="3">
    <location>
        <begin position="118"/>
        <end position="148"/>
    </location>
</feature>
<feature type="region of interest" description="Disordered" evidence="3">
    <location>
        <begin position="171"/>
        <end position="300"/>
    </location>
</feature>
<feature type="region of interest" description="Disordered" evidence="3">
    <location>
        <begin position="584"/>
        <end position="643"/>
    </location>
</feature>
<feature type="compositionally biased region" description="Low complexity" evidence="3">
    <location>
        <begin position="125"/>
        <end position="145"/>
    </location>
</feature>
<feature type="compositionally biased region" description="Polar residues" evidence="3">
    <location>
        <begin position="176"/>
        <end position="187"/>
    </location>
</feature>
<feature type="compositionally biased region" description="Basic residues" evidence="3">
    <location>
        <begin position="192"/>
        <end position="201"/>
    </location>
</feature>
<feature type="compositionally biased region" description="Basic and acidic residues" evidence="3">
    <location>
        <begin position="254"/>
        <end position="285"/>
    </location>
</feature>
<feature type="compositionally biased region" description="Low complexity" evidence="3">
    <location>
        <begin position="604"/>
        <end position="643"/>
    </location>
</feature>
<feature type="cross-link" description="Glycyl lysine isopeptide (Lys-Gly) (interchain with G-Cter in ubiquitin)" evidence="6">
    <location>
        <position position="123"/>
    </location>
</feature>
<feature type="cross-link" description="Glycyl lysine isopeptide (Lys-Gly) (interchain with G-Cter in ubiquitin)" evidence="6">
    <location>
        <position position="201"/>
    </location>
</feature>
<feature type="cross-link" description="Glycyl lysine isopeptide (Lys-Gly) (interchain with G-Cter in ubiquitin)" evidence="6">
    <location>
        <position position="355"/>
    </location>
</feature>
<feature type="cross-link" description="Glycyl lysine isopeptide (Lys-Gly) (interchain with G-Cter in ubiquitin)" evidence="6">
    <location>
        <position position="397"/>
    </location>
</feature>
<feature type="cross-link" description="Glycyl lysine isopeptide (Lys-Gly) (interchain with G-Cter in ubiquitin)" evidence="6">
    <location>
        <position position="418"/>
    </location>
</feature>
<feature type="cross-link" description="Glycyl lysine isopeptide (Lys-Gly) (interchain with G-Cter in ubiquitin)" evidence="6">
    <location>
        <position position="457"/>
    </location>
</feature>
<feature type="cross-link" description="Glycyl lysine isopeptide (Lys-Gly) (interchain with G-Cter in ubiquitin)" evidence="6">
    <location>
        <position position="478"/>
    </location>
</feature>
<feature type="cross-link" description="Glycyl lysine isopeptide (Lys-Gly) (interchain with G-Cter in ubiquitin)" evidence="6">
    <location>
        <position position="480"/>
    </location>
</feature>
<feature type="cross-link" description="Glycyl lysine isopeptide (Lys-Gly) (interchain with G-Cter in ubiquitin)" evidence="6">
    <location>
        <position position="545"/>
    </location>
</feature>
<feature type="sequence conflict" description="In Ref. 2; AAA28544." evidence="11" ref="2">
    <original>T</original>
    <variation>M</variation>
    <location>
        <position position="255"/>
    </location>
</feature>
<feature type="sequence conflict" description="In Ref. 2; AAA28544." evidence="11" ref="2">
    <original>H</original>
    <variation>Q</variation>
    <location>
        <position position="281"/>
    </location>
</feature>
<feature type="sequence conflict" description="In Ref. 2; AAA28544." evidence="11" ref="2">
    <original>T</original>
    <variation>I</variation>
    <location>
        <position position="501"/>
    </location>
</feature>
<feature type="strand" evidence="12">
    <location>
        <begin position="501"/>
        <end position="504"/>
    </location>
</feature>
<feature type="strand" evidence="12">
    <location>
        <begin position="507"/>
        <end position="509"/>
    </location>
</feature>
<feature type="turn" evidence="12">
    <location>
        <begin position="511"/>
        <end position="513"/>
    </location>
</feature>
<feature type="strand" evidence="12">
    <location>
        <begin position="516"/>
        <end position="519"/>
    </location>
</feature>
<feature type="helix" evidence="12">
    <location>
        <begin position="520"/>
        <end position="530"/>
    </location>
</feature>
<feature type="strand" evidence="12">
    <location>
        <begin position="531"/>
        <end position="534"/>
    </location>
</feature>
<feature type="turn" evidence="12">
    <location>
        <begin position="541"/>
        <end position="543"/>
    </location>
</feature>
<feature type="strand" evidence="12">
    <location>
        <begin position="546"/>
        <end position="548"/>
    </location>
</feature>
<feature type="helix" evidence="12">
    <location>
        <begin position="550"/>
        <end position="560"/>
    </location>
</feature>
<reference key="1">
    <citation type="journal article" date="1990" name="EMBO J.">
        <title>The tramtrack gene encodes a Drosophila finger protein that interacts with the ftz transcriptional regulatory region and shows a novel embryonic expression pattern.</title>
        <authorList>
            <person name="Harrison S.D."/>
            <person name="Travers A.A."/>
        </authorList>
    </citation>
    <scope>NUCLEOTIDE SEQUENCE [MRNA]</scope>
    <scope>FUNCTION</scope>
    <scope>DEVELOPMENTAL STAGE</scope>
    <source>
        <tissue>Embryo</tissue>
    </source>
</reference>
<reference key="2">
    <citation type="journal article" date="1993" name="Development">
        <title>Repression of Drosophila pair-rule segmentation genes by ectopic expression of tramtrack.</title>
        <authorList>
            <person name="Brown J.L."/>
            <person name="Wu C."/>
        </authorList>
    </citation>
    <scope>NUCLEOTIDE SEQUENCE [MRNA]</scope>
    <scope>FUNCTION</scope>
    <scope>DEVELOPMENTAL STAGE</scope>
    <source>
        <tissue>Embryo</tissue>
    </source>
</reference>
<reference key="3">
    <citation type="journal article" date="1993" name="Genes Dev.">
        <title>Tramtrack is a transcriptional repressor required for cell fate determination in the Drosophila eye.</title>
        <authorList>
            <person name="Xiong W.C."/>
            <person name="Montell C."/>
        </authorList>
    </citation>
    <scope>NUCLEOTIDE SEQUENCE [MRNA]</scope>
    <scope>FUNCTION</scope>
</reference>
<reference key="4">
    <citation type="journal article" date="2000" name="Science">
        <title>The genome sequence of Drosophila melanogaster.</title>
        <authorList>
            <person name="Adams M.D."/>
            <person name="Celniker S.E."/>
            <person name="Holt R.A."/>
            <person name="Evans C.A."/>
            <person name="Gocayne J.D."/>
            <person name="Amanatides P.G."/>
            <person name="Scherer S.E."/>
            <person name="Li P.W."/>
            <person name="Hoskins R.A."/>
            <person name="Galle R.F."/>
            <person name="George R.A."/>
            <person name="Lewis S.E."/>
            <person name="Richards S."/>
            <person name="Ashburner M."/>
            <person name="Henderson S.N."/>
            <person name="Sutton G.G."/>
            <person name="Wortman J.R."/>
            <person name="Yandell M.D."/>
            <person name="Zhang Q."/>
            <person name="Chen L.X."/>
            <person name="Brandon R.C."/>
            <person name="Rogers Y.-H.C."/>
            <person name="Blazej R.G."/>
            <person name="Champe M."/>
            <person name="Pfeiffer B.D."/>
            <person name="Wan K.H."/>
            <person name="Doyle C."/>
            <person name="Baxter E.G."/>
            <person name="Helt G."/>
            <person name="Nelson C.R."/>
            <person name="Miklos G.L.G."/>
            <person name="Abril J.F."/>
            <person name="Agbayani A."/>
            <person name="An H.-J."/>
            <person name="Andrews-Pfannkoch C."/>
            <person name="Baldwin D."/>
            <person name="Ballew R.M."/>
            <person name="Basu A."/>
            <person name="Baxendale J."/>
            <person name="Bayraktaroglu L."/>
            <person name="Beasley E.M."/>
            <person name="Beeson K.Y."/>
            <person name="Benos P.V."/>
            <person name="Berman B.P."/>
            <person name="Bhandari D."/>
            <person name="Bolshakov S."/>
            <person name="Borkova D."/>
            <person name="Botchan M.R."/>
            <person name="Bouck J."/>
            <person name="Brokstein P."/>
            <person name="Brottier P."/>
            <person name="Burtis K.C."/>
            <person name="Busam D.A."/>
            <person name="Butler H."/>
            <person name="Cadieu E."/>
            <person name="Center A."/>
            <person name="Chandra I."/>
            <person name="Cherry J.M."/>
            <person name="Cawley S."/>
            <person name="Dahlke C."/>
            <person name="Davenport L.B."/>
            <person name="Davies P."/>
            <person name="de Pablos B."/>
            <person name="Delcher A."/>
            <person name="Deng Z."/>
            <person name="Mays A.D."/>
            <person name="Dew I."/>
            <person name="Dietz S.M."/>
            <person name="Dodson K."/>
            <person name="Doup L.E."/>
            <person name="Downes M."/>
            <person name="Dugan-Rocha S."/>
            <person name="Dunkov B.C."/>
            <person name="Dunn P."/>
            <person name="Durbin K.J."/>
            <person name="Evangelista C.C."/>
            <person name="Ferraz C."/>
            <person name="Ferriera S."/>
            <person name="Fleischmann W."/>
            <person name="Fosler C."/>
            <person name="Gabrielian A.E."/>
            <person name="Garg N.S."/>
            <person name="Gelbart W.M."/>
            <person name="Glasser K."/>
            <person name="Glodek A."/>
            <person name="Gong F."/>
            <person name="Gorrell J.H."/>
            <person name="Gu Z."/>
            <person name="Guan P."/>
            <person name="Harris M."/>
            <person name="Harris N.L."/>
            <person name="Harvey D.A."/>
            <person name="Heiman T.J."/>
            <person name="Hernandez J.R."/>
            <person name="Houck J."/>
            <person name="Hostin D."/>
            <person name="Houston K.A."/>
            <person name="Howland T.J."/>
            <person name="Wei M.-H."/>
            <person name="Ibegwam C."/>
            <person name="Jalali M."/>
            <person name="Kalush F."/>
            <person name="Karpen G.H."/>
            <person name="Ke Z."/>
            <person name="Kennison J.A."/>
            <person name="Ketchum K.A."/>
            <person name="Kimmel B.E."/>
            <person name="Kodira C.D."/>
            <person name="Kraft C.L."/>
            <person name="Kravitz S."/>
            <person name="Kulp D."/>
            <person name="Lai Z."/>
            <person name="Lasko P."/>
            <person name="Lei Y."/>
            <person name="Levitsky A.A."/>
            <person name="Li J.H."/>
            <person name="Li Z."/>
            <person name="Liang Y."/>
            <person name="Lin X."/>
            <person name="Liu X."/>
            <person name="Mattei B."/>
            <person name="McIntosh T.C."/>
            <person name="McLeod M.P."/>
            <person name="McPherson D."/>
            <person name="Merkulov G."/>
            <person name="Milshina N.V."/>
            <person name="Mobarry C."/>
            <person name="Morris J."/>
            <person name="Moshrefi A."/>
            <person name="Mount S.M."/>
            <person name="Moy M."/>
            <person name="Murphy B."/>
            <person name="Murphy L."/>
            <person name="Muzny D.M."/>
            <person name="Nelson D.L."/>
            <person name="Nelson D.R."/>
            <person name="Nelson K.A."/>
            <person name="Nixon K."/>
            <person name="Nusskern D.R."/>
            <person name="Pacleb J.M."/>
            <person name="Palazzolo M."/>
            <person name="Pittman G.S."/>
            <person name="Pan S."/>
            <person name="Pollard J."/>
            <person name="Puri V."/>
            <person name="Reese M.G."/>
            <person name="Reinert K."/>
            <person name="Remington K."/>
            <person name="Saunders R.D.C."/>
            <person name="Scheeler F."/>
            <person name="Shen H."/>
            <person name="Shue B.C."/>
            <person name="Siden-Kiamos I."/>
            <person name="Simpson M."/>
            <person name="Skupski M.P."/>
            <person name="Smith T.J."/>
            <person name="Spier E."/>
            <person name="Spradling A.C."/>
            <person name="Stapleton M."/>
            <person name="Strong R."/>
            <person name="Sun E."/>
            <person name="Svirskas R."/>
            <person name="Tector C."/>
            <person name="Turner R."/>
            <person name="Venter E."/>
            <person name="Wang A.H."/>
            <person name="Wang X."/>
            <person name="Wang Z.-Y."/>
            <person name="Wassarman D.A."/>
            <person name="Weinstock G.M."/>
            <person name="Weissenbach J."/>
            <person name="Williams S.M."/>
            <person name="Woodage T."/>
            <person name="Worley K.C."/>
            <person name="Wu D."/>
            <person name="Yang S."/>
            <person name="Yao Q.A."/>
            <person name="Ye J."/>
            <person name="Yeh R.-F."/>
            <person name="Zaveri J.S."/>
            <person name="Zhan M."/>
            <person name="Zhang G."/>
            <person name="Zhao Q."/>
            <person name="Zheng L."/>
            <person name="Zheng X.H."/>
            <person name="Zhong F.N."/>
            <person name="Zhong W."/>
            <person name="Zhou X."/>
            <person name="Zhu S.C."/>
            <person name="Zhu X."/>
            <person name="Smith H.O."/>
            <person name="Gibbs R.A."/>
            <person name="Myers E.W."/>
            <person name="Rubin G.M."/>
            <person name="Venter J.C."/>
        </authorList>
    </citation>
    <scope>NUCLEOTIDE SEQUENCE [LARGE SCALE GENOMIC DNA]</scope>
    <source>
        <strain>Berkeley</strain>
    </source>
</reference>
<reference key="5">
    <citation type="journal article" date="2002" name="Genome Biol.">
        <title>Annotation of the Drosophila melanogaster euchromatic genome: a systematic review.</title>
        <authorList>
            <person name="Misra S."/>
            <person name="Crosby M.A."/>
            <person name="Mungall C.J."/>
            <person name="Matthews B.B."/>
            <person name="Campbell K.S."/>
            <person name="Hradecky P."/>
            <person name="Huang Y."/>
            <person name="Kaminker J.S."/>
            <person name="Millburn G.H."/>
            <person name="Prochnik S.E."/>
            <person name="Smith C.D."/>
            <person name="Tupy J.L."/>
            <person name="Whitfield E.J."/>
            <person name="Bayraktaroglu L."/>
            <person name="Berman B.P."/>
            <person name="Bettencourt B.R."/>
            <person name="Celniker S.E."/>
            <person name="de Grey A.D.N.J."/>
            <person name="Drysdale R.A."/>
            <person name="Harris N.L."/>
            <person name="Richter J."/>
            <person name="Russo S."/>
            <person name="Schroeder A.J."/>
            <person name="Shu S.Q."/>
            <person name="Stapleton M."/>
            <person name="Yamada C."/>
            <person name="Ashburner M."/>
            <person name="Gelbart W.M."/>
            <person name="Rubin G.M."/>
            <person name="Lewis S.E."/>
        </authorList>
    </citation>
    <scope>GENOME REANNOTATION</scope>
    <scope>ALTERNATIVE SPLICING</scope>
    <source>
        <strain>Berkeley</strain>
    </source>
</reference>
<reference key="6">
    <citation type="journal article" date="2002" name="Genome Biol.">
        <title>A Drosophila full-length cDNA resource.</title>
        <authorList>
            <person name="Stapleton M."/>
            <person name="Carlson J.W."/>
            <person name="Brokstein P."/>
            <person name="Yu C."/>
            <person name="Champe M."/>
            <person name="George R.A."/>
            <person name="Guarin H."/>
            <person name="Kronmiller B."/>
            <person name="Pacleb J.M."/>
            <person name="Park S."/>
            <person name="Wan K.H."/>
            <person name="Rubin G.M."/>
            <person name="Celniker S.E."/>
        </authorList>
    </citation>
    <scope>NUCLEOTIDE SEQUENCE [LARGE SCALE MRNA]</scope>
    <source>
        <strain>Berkeley</strain>
        <tissue>Embryo</tissue>
    </source>
</reference>
<reference key="7">
    <citation type="submission" date="2005-10" db="EMBL/GenBank/DDBJ databases">
        <authorList>
            <person name="Stapleton M."/>
            <person name="Carlson J.W."/>
            <person name="Chavez C."/>
            <person name="Frise E."/>
            <person name="George R.A."/>
            <person name="Pacleb J.M."/>
            <person name="Park S."/>
            <person name="Wan K.H."/>
            <person name="Yu C."/>
            <person name="Celniker S.E."/>
        </authorList>
    </citation>
    <scope>NUCLEOTIDE SEQUENCE [LARGE SCALE MRNA]</scope>
    <source>
        <strain>Berkeley</strain>
        <tissue>Embryo</tissue>
    </source>
</reference>
<reference key="8">
    <citation type="journal article" date="1992" name="J. Mol. Biol.">
        <title>Sequence-specific DNA binding by a two zinc-finger peptide from the Drosophila melanogaster Tramtrack protein.</title>
        <authorList>
            <person name="Fairall L."/>
            <person name="Harrison S.D."/>
            <person name="Travers A.A."/>
            <person name="Rhodes D."/>
        </authorList>
    </citation>
    <scope>DNA-BINDING</scope>
</reference>
<reference key="9">
    <citation type="journal article" date="2002" name="Nucleic Acids Res.">
        <title>The Drosophila transcription factor tramtrack (TTK) interacts with Trithorax-like (GAGA) and represses GAGA-mediated activation.</title>
        <authorList>
            <person name="Pagans S."/>
            <person name="Ortiz-Lombardia M."/>
            <person name="Espinas M.L."/>
            <person name="Bernues J."/>
            <person name="Azorin F."/>
        </authorList>
    </citation>
    <scope>FUNCTION</scope>
    <scope>INTERACTION WITH TRL</scope>
    <scope>HOMODIMERIZATION</scope>
</reference>
<reference key="10">
    <citation type="journal article" date="2008" name="J. Biol. Chem.">
        <title>Two modes of degradation of the tramtrack transcription factors by Siah homologues.</title>
        <authorList>
            <person name="Cooper S.E."/>
            <person name="Murawsky C.M."/>
            <person name="Lowe N."/>
            <person name="Travers A.A."/>
        </authorList>
    </citation>
    <scope>FUNCTION</scope>
    <scope>INTERACTION WITH PHYL</scope>
</reference>
<reference key="11">
    <citation type="journal article" date="2008" name="Mol. Cell. Biol.">
        <title>Deubiquitylating enzyme UBP64 controls cell fate through stabilization of the transcriptional repressor tramtrack.</title>
        <authorList>
            <person name="Bajpe P.K."/>
            <person name="van der Knaap J.A."/>
            <person name="Demmers J.A."/>
            <person name="Bezstarosti K."/>
            <person name="Bassett A."/>
            <person name="van Beusekom H.M."/>
            <person name="Travers A.A."/>
            <person name="Verrijzer C.P."/>
        </authorList>
    </citation>
    <scope>FUNCTION</scope>
    <scope>UBIQUITINATION AT LYS-123; LYS-201; LYS-355; LYS-397; LYS-418; LYS-457; LYS-478; LYS-480 AND LYS-545</scope>
</reference>
<reference key="12">
    <citation type="journal article" date="1993" name="Nature">
        <title>The crystal structure of a two zinc-finger peptide reveals an extension to the rules for zinc-finger/DNA recognition.</title>
        <authorList>
            <person name="Fairall L."/>
            <person name="Schwabe J.W.R."/>
            <person name="Chapman L."/>
            <person name="Finch J.T."/>
            <person name="Rhodes D."/>
        </authorList>
    </citation>
    <scope>X-RAY CRYSTALLOGRAPHY (2.8 ANGSTROMS) OF 499-561</scope>
    <scope>FUNCTION</scope>
</reference>
<gene>
    <name type="primary">ttk</name>
    <name type="synonym">FTZ-F2</name>
    <name type="ORF">CG1856</name>
</gene>